<proteinExistence type="inferred from homology"/>
<organism>
    <name type="scientific">Clostridium tetani (strain Massachusetts / E88)</name>
    <dbReference type="NCBI Taxonomy" id="212717"/>
    <lineage>
        <taxon>Bacteria</taxon>
        <taxon>Bacillati</taxon>
        <taxon>Bacillota</taxon>
        <taxon>Clostridia</taxon>
        <taxon>Eubacteriales</taxon>
        <taxon>Clostridiaceae</taxon>
        <taxon>Clostridium</taxon>
    </lineage>
</organism>
<protein>
    <recommendedName>
        <fullName evidence="1">GMP synthase [glutamine-hydrolyzing]</fullName>
        <ecNumber evidence="1">6.3.5.2</ecNumber>
    </recommendedName>
    <alternativeName>
        <fullName evidence="1">GMP synthetase</fullName>
    </alternativeName>
    <alternativeName>
        <fullName evidence="1">Glutamine amidotransferase</fullName>
    </alternativeName>
</protein>
<sequence>MKKELVFIIDFGGQYSQLIARRVRENNVYCEIIPYSTSIEKIKEKNPKGIIFSGGPNSVYGENSPRISKEIFEIDVPVLGICYGQQLASFILGGKVESAKVREYGKTAVNLDNKCALFEGIDKVQECWMSHTDYVSEIPSGFNIVAYTDGCKVAAMANEDKKIYGVQFHPEVEHTPFGKKMLKNFLFNICELKGDWSVTSFAEEKIKEIRELVGDKKVICALSGGVDSSVAAVIVHKAIGDQLTCIFVDHGLLRKDEGDQVESIFKEKFQMNLIRVNAQDRFLGKLKGVTEPERKRKIIGEEFIRVFEEEANKLGKIDYLVQGTIYPDVVESGTDTSATIKSHHNVGGLPEDIEFELIEPLRELFKDEVRRVGEELGIPHKLVWRQPFPGPGLGIRVLGEVTEEKLEIVREADAIFREEIANAGLDEKIWQYFACLPNIRSVGVMGDERTYSHTIGLRAVNSSDGMTSDWAKIPYEVLDKVSIRIVNEVKGVNRIVYDITSKPPSTIEWE</sequence>
<evidence type="ECO:0000255" key="1">
    <source>
        <dbReference type="HAMAP-Rule" id="MF_00344"/>
    </source>
</evidence>
<dbReference type="EC" id="6.3.5.2" evidence="1"/>
<dbReference type="EMBL" id="AE015927">
    <property type="protein sequence ID" value="AAO36878.1"/>
    <property type="molecule type" value="Genomic_DNA"/>
</dbReference>
<dbReference type="RefSeq" id="WP_011100539.1">
    <property type="nucleotide sequence ID" value="NC_004557.1"/>
</dbReference>
<dbReference type="SMR" id="Q891G7"/>
<dbReference type="STRING" id="212717.CTC_02409"/>
<dbReference type="MEROPS" id="C26.957"/>
<dbReference type="GeneID" id="24254108"/>
<dbReference type="KEGG" id="ctc:CTC_02409"/>
<dbReference type="HOGENOM" id="CLU_014340_0_5_9"/>
<dbReference type="OrthoDB" id="9802219at2"/>
<dbReference type="UniPathway" id="UPA00189">
    <property type="reaction ID" value="UER00296"/>
</dbReference>
<dbReference type="Proteomes" id="UP000001412">
    <property type="component" value="Chromosome"/>
</dbReference>
<dbReference type="GO" id="GO:0005829">
    <property type="term" value="C:cytosol"/>
    <property type="evidence" value="ECO:0007669"/>
    <property type="project" value="TreeGrafter"/>
</dbReference>
<dbReference type="GO" id="GO:0005524">
    <property type="term" value="F:ATP binding"/>
    <property type="evidence" value="ECO:0007669"/>
    <property type="project" value="UniProtKB-UniRule"/>
</dbReference>
<dbReference type="GO" id="GO:0003921">
    <property type="term" value="F:GMP synthase activity"/>
    <property type="evidence" value="ECO:0007669"/>
    <property type="project" value="InterPro"/>
</dbReference>
<dbReference type="CDD" id="cd01742">
    <property type="entry name" value="GATase1_GMP_Synthase"/>
    <property type="match status" value="1"/>
</dbReference>
<dbReference type="CDD" id="cd01997">
    <property type="entry name" value="GMP_synthase_C"/>
    <property type="match status" value="1"/>
</dbReference>
<dbReference type="FunFam" id="3.30.300.10:FF:000002">
    <property type="entry name" value="GMP synthase [glutamine-hydrolyzing]"/>
    <property type="match status" value="1"/>
</dbReference>
<dbReference type="FunFam" id="3.40.50.620:FF:000001">
    <property type="entry name" value="GMP synthase [glutamine-hydrolyzing]"/>
    <property type="match status" value="1"/>
</dbReference>
<dbReference type="FunFam" id="3.40.50.880:FF:000001">
    <property type="entry name" value="GMP synthase [glutamine-hydrolyzing]"/>
    <property type="match status" value="1"/>
</dbReference>
<dbReference type="Gene3D" id="3.30.300.10">
    <property type="match status" value="1"/>
</dbReference>
<dbReference type="Gene3D" id="3.40.50.880">
    <property type="match status" value="1"/>
</dbReference>
<dbReference type="Gene3D" id="3.40.50.620">
    <property type="entry name" value="HUPs"/>
    <property type="match status" value="1"/>
</dbReference>
<dbReference type="HAMAP" id="MF_00344">
    <property type="entry name" value="GMP_synthase"/>
    <property type="match status" value="1"/>
</dbReference>
<dbReference type="InterPro" id="IPR029062">
    <property type="entry name" value="Class_I_gatase-like"/>
</dbReference>
<dbReference type="InterPro" id="IPR017926">
    <property type="entry name" value="GATASE"/>
</dbReference>
<dbReference type="InterPro" id="IPR001674">
    <property type="entry name" value="GMP_synth_C"/>
</dbReference>
<dbReference type="InterPro" id="IPR004739">
    <property type="entry name" value="GMP_synth_GATase"/>
</dbReference>
<dbReference type="InterPro" id="IPR022955">
    <property type="entry name" value="GMP_synthase"/>
</dbReference>
<dbReference type="InterPro" id="IPR025777">
    <property type="entry name" value="GMPS_ATP_PPase_dom"/>
</dbReference>
<dbReference type="InterPro" id="IPR022310">
    <property type="entry name" value="NAD/GMP_synthase"/>
</dbReference>
<dbReference type="InterPro" id="IPR014729">
    <property type="entry name" value="Rossmann-like_a/b/a_fold"/>
</dbReference>
<dbReference type="NCBIfam" id="TIGR00884">
    <property type="entry name" value="guaA_Cterm"/>
    <property type="match status" value="1"/>
</dbReference>
<dbReference type="NCBIfam" id="TIGR00888">
    <property type="entry name" value="guaA_Nterm"/>
    <property type="match status" value="1"/>
</dbReference>
<dbReference type="NCBIfam" id="NF000848">
    <property type="entry name" value="PRK00074.1"/>
    <property type="match status" value="1"/>
</dbReference>
<dbReference type="PANTHER" id="PTHR11922:SF2">
    <property type="entry name" value="GMP SYNTHASE [GLUTAMINE-HYDROLYZING]"/>
    <property type="match status" value="1"/>
</dbReference>
<dbReference type="PANTHER" id="PTHR11922">
    <property type="entry name" value="GMP SYNTHASE-RELATED"/>
    <property type="match status" value="1"/>
</dbReference>
<dbReference type="Pfam" id="PF00117">
    <property type="entry name" value="GATase"/>
    <property type="match status" value="1"/>
</dbReference>
<dbReference type="Pfam" id="PF00958">
    <property type="entry name" value="GMP_synt_C"/>
    <property type="match status" value="1"/>
</dbReference>
<dbReference type="Pfam" id="PF02540">
    <property type="entry name" value="NAD_synthase"/>
    <property type="match status" value="1"/>
</dbReference>
<dbReference type="PRINTS" id="PR00097">
    <property type="entry name" value="ANTSNTHASEII"/>
</dbReference>
<dbReference type="PRINTS" id="PR00099">
    <property type="entry name" value="CPSGATASE"/>
</dbReference>
<dbReference type="PRINTS" id="PR00096">
    <property type="entry name" value="GATASE"/>
</dbReference>
<dbReference type="SUPFAM" id="SSF52402">
    <property type="entry name" value="Adenine nucleotide alpha hydrolases-like"/>
    <property type="match status" value="1"/>
</dbReference>
<dbReference type="SUPFAM" id="SSF52317">
    <property type="entry name" value="Class I glutamine amidotransferase-like"/>
    <property type="match status" value="1"/>
</dbReference>
<dbReference type="PROSITE" id="PS51273">
    <property type="entry name" value="GATASE_TYPE_1"/>
    <property type="match status" value="1"/>
</dbReference>
<dbReference type="PROSITE" id="PS51553">
    <property type="entry name" value="GMPS_ATP_PPASE"/>
    <property type="match status" value="1"/>
</dbReference>
<comment type="function">
    <text evidence="1">Catalyzes the synthesis of GMP from XMP.</text>
</comment>
<comment type="catalytic activity">
    <reaction evidence="1">
        <text>XMP + L-glutamine + ATP + H2O = GMP + L-glutamate + AMP + diphosphate + 2 H(+)</text>
        <dbReference type="Rhea" id="RHEA:11680"/>
        <dbReference type="ChEBI" id="CHEBI:15377"/>
        <dbReference type="ChEBI" id="CHEBI:15378"/>
        <dbReference type="ChEBI" id="CHEBI:29985"/>
        <dbReference type="ChEBI" id="CHEBI:30616"/>
        <dbReference type="ChEBI" id="CHEBI:33019"/>
        <dbReference type="ChEBI" id="CHEBI:57464"/>
        <dbReference type="ChEBI" id="CHEBI:58115"/>
        <dbReference type="ChEBI" id="CHEBI:58359"/>
        <dbReference type="ChEBI" id="CHEBI:456215"/>
        <dbReference type="EC" id="6.3.5.2"/>
    </reaction>
</comment>
<comment type="pathway">
    <text evidence="1">Purine metabolism; GMP biosynthesis; GMP from XMP (L-Gln route): step 1/1.</text>
</comment>
<comment type="subunit">
    <text evidence="1">Homodimer.</text>
</comment>
<keyword id="KW-0067">ATP-binding</keyword>
<keyword id="KW-0315">Glutamine amidotransferase</keyword>
<keyword id="KW-0332">GMP biosynthesis</keyword>
<keyword id="KW-0436">Ligase</keyword>
<keyword id="KW-0547">Nucleotide-binding</keyword>
<keyword id="KW-0658">Purine biosynthesis</keyword>
<keyword id="KW-1185">Reference proteome</keyword>
<reference key="1">
    <citation type="journal article" date="2003" name="Proc. Natl. Acad. Sci. U.S.A.">
        <title>The genome sequence of Clostridium tetani, the causative agent of tetanus disease.</title>
        <authorList>
            <person name="Brueggemann H."/>
            <person name="Baeumer S."/>
            <person name="Fricke W.F."/>
            <person name="Wiezer A."/>
            <person name="Liesegang H."/>
            <person name="Decker I."/>
            <person name="Herzberg C."/>
            <person name="Martinez-Arias R."/>
            <person name="Merkl R."/>
            <person name="Henne A."/>
            <person name="Gottschalk G."/>
        </authorList>
    </citation>
    <scope>NUCLEOTIDE SEQUENCE [LARGE SCALE GENOMIC DNA]</scope>
    <source>
        <strain>Massachusetts / E88</strain>
    </source>
</reference>
<name>GUAA_CLOTE</name>
<gene>
    <name evidence="1" type="primary">guaA</name>
    <name type="ordered locus">CTC_02409</name>
</gene>
<feature type="chain" id="PRO_0000140115" description="GMP synthase [glutamine-hydrolyzing]">
    <location>
        <begin position="1"/>
        <end position="510"/>
    </location>
</feature>
<feature type="domain" description="Glutamine amidotransferase type-1" evidence="1">
    <location>
        <begin position="5"/>
        <end position="195"/>
    </location>
</feature>
<feature type="domain" description="GMPS ATP-PPase" evidence="1">
    <location>
        <begin position="196"/>
        <end position="385"/>
    </location>
</feature>
<feature type="active site" description="Nucleophile" evidence="1">
    <location>
        <position position="82"/>
    </location>
</feature>
<feature type="active site" evidence="1">
    <location>
        <position position="169"/>
    </location>
</feature>
<feature type="active site" evidence="1">
    <location>
        <position position="171"/>
    </location>
</feature>
<feature type="binding site" evidence="1">
    <location>
        <begin position="223"/>
        <end position="229"/>
    </location>
    <ligand>
        <name>ATP</name>
        <dbReference type="ChEBI" id="CHEBI:30616"/>
    </ligand>
</feature>
<accession>Q891G7</accession>